<name>RS19_CLOBH</name>
<feature type="chain" id="PRO_1000051038" description="Small ribosomal subunit protein uS19">
    <location>
        <begin position="1"/>
        <end position="94"/>
    </location>
</feature>
<sequence length="94" mass="10894">MSRSVKKGPYIQEVLLKRINEMNKNGEKKVLKTWSRSSTVFPQMIGHTIAVHDGRKHVPVYITEDMVGHKLGEFVLTRTYRGHDDKSEKSSRLR</sequence>
<comment type="function">
    <text evidence="1">Protein S19 forms a complex with S13 that binds strongly to the 16S ribosomal RNA.</text>
</comment>
<comment type="similarity">
    <text evidence="1">Belongs to the universal ribosomal protein uS19 family.</text>
</comment>
<accession>A5I7K2</accession>
<accession>A7G8T4</accession>
<keyword id="KW-1185">Reference proteome</keyword>
<keyword id="KW-0687">Ribonucleoprotein</keyword>
<keyword id="KW-0689">Ribosomal protein</keyword>
<keyword id="KW-0694">RNA-binding</keyword>
<keyword id="KW-0699">rRNA-binding</keyword>
<reference key="1">
    <citation type="journal article" date="2007" name="Genome Res.">
        <title>Genome sequence of a proteolytic (Group I) Clostridium botulinum strain Hall A and comparative analysis of the clostridial genomes.</title>
        <authorList>
            <person name="Sebaihia M."/>
            <person name="Peck M.W."/>
            <person name="Minton N.P."/>
            <person name="Thomson N.R."/>
            <person name="Holden M.T.G."/>
            <person name="Mitchell W.J."/>
            <person name="Carter A.T."/>
            <person name="Bentley S.D."/>
            <person name="Mason D.R."/>
            <person name="Crossman L."/>
            <person name="Paul C.J."/>
            <person name="Ivens A."/>
            <person name="Wells-Bennik M.H.J."/>
            <person name="Davis I.J."/>
            <person name="Cerdeno-Tarraga A.M."/>
            <person name="Churcher C."/>
            <person name="Quail M.A."/>
            <person name="Chillingworth T."/>
            <person name="Feltwell T."/>
            <person name="Fraser A."/>
            <person name="Goodhead I."/>
            <person name="Hance Z."/>
            <person name="Jagels K."/>
            <person name="Larke N."/>
            <person name="Maddison M."/>
            <person name="Moule S."/>
            <person name="Mungall K."/>
            <person name="Norbertczak H."/>
            <person name="Rabbinowitsch E."/>
            <person name="Sanders M."/>
            <person name="Simmonds M."/>
            <person name="White B."/>
            <person name="Whithead S."/>
            <person name="Parkhill J."/>
        </authorList>
    </citation>
    <scope>NUCLEOTIDE SEQUENCE [LARGE SCALE GENOMIC DNA]</scope>
    <source>
        <strain>Hall / ATCC 3502 / NCTC 13319 / Type A</strain>
    </source>
</reference>
<reference key="2">
    <citation type="journal article" date="2007" name="PLoS ONE">
        <title>Analysis of the neurotoxin complex genes in Clostridium botulinum A1-A4 and B1 strains: BoNT/A3, /Ba4 and /B1 clusters are located within plasmids.</title>
        <authorList>
            <person name="Smith T.J."/>
            <person name="Hill K.K."/>
            <person name="Foley B.T."/>
            <person name="Detter J.C."/>
            <person name="Munk A.C."/>
            <person name="Bruce D.C."/>
            <person name="Doggett N.A."/>
            <person name="Smith L.A."/>
            <person name="Marks J.D."/>
            <person name="Xie G."/>
            <person name="Brettin T.S."/>
        </authorList>
    </citation>
    <scope>NUCLEOTIDE SEQUENCE [LARGE SCALE GENOMIC DNA]</scope>
    <source>
        <strain>Hall / ATCC 3502 / NCTC 13319 / Type A</strain>
    </source>
</reference>
<gene>
    <name evidence="1" type="primary">rpsS</name>
    <name type="ordered locus">CBO3476</name>
    <name type="ordered locus">CLC_3421</name>
</gene>
<protein>
    <recommendedName>
        <fullName evidence="1">Small ribosomal subunit protein uS19</fullName>
    </recommendedName>
    <alternativeName>
        <fullName evidence="2">30S ribosomal protein S19</fullName>
    </alternativeName>
</protein>
<proteinExistence type="inferred from homology"/>
<organism>
    <name type="scientific">Clostridium botulinum (strain Hall / ATCC 3502 / NCTC 13319 / Type A)</name>
    <dbReference type="NCBI Taxonomy" id="441771"/>
    <lineage>
        <taxon>Bacteria</taxon>
        <taxon>Bacillati</taxon>
        <taxon>Bacillota</taxon>
        <taxon>Clostridia</taxon>
        <taxon>Eubacteriales</taxon>
        <taxon>Clostridiaceae</taxon>
        <taxon>Clostridium</taxon>
    </lineage>
</organism>
<dbReference type="EMBL" id="CP000727">
    <property type="protein sequence ID" value="ABS38486.1"/>
    <property type="molecule type" value="Genomic_DNA"/>
</dbReference>
<dbReference type="EMBL" id="AM412317">
    <property type="protein sequence ID" value="CAL85037.1"/>
    <property type="molecule type" value="Genomic_DNA"/>
</dbReference>
<dbReference type="RefSeq" id="WP_003357326.1">
    <property type="nucleotide sequence ID" value="NC_009698.1"/>
</dbReference>
<dbReference type="RefSeq" id="YP_001255958.1">
    <property type="nucleotide sequence ID" value="NC_009495.1"/>
</dbReference>
<dbReference type="RefSeq" id="YP_001389199.1">
    <property type="nucleotide sequence ID" value="NC_009698.1"/>
</dbReference>
<dbReference type="SMR" id="A5I7K2"/>
<dbReference type="GeneID" id="5187782"/>
<dbReference type="KEGG" id="cbh:CLC_3421"/>
<dbReference type="KEGG" id="cbo:CBO3476"/>
<dbReference type="PATRIC" id="fig|413999.7.peg.3453"/>
<dbReference type="HOGENOM" id="CLU_144911_0_1_9"/>
<dbReference type="PRO" id="PR:A5I7K2"/>
<dbReference type="Proteomes" id="UP000001986">
    <property type="component" value="Chromosome"/>
</dbReference>
<dbReference type="GO" id="GO:0005737">
    <property type="term" value="C:cytoplasm"/>
    <property type="evidence" value="ECO:0007669"/>
    <property type="project" value="UniProtKB-ARBA"/>
</dbReference>
<dbReference type="GO" id="GO:0015935">
    <property type="term" value="C:small ribosomal subunit"/>
    <property type="evidence" value="ECO:0007669"/>
    <property type="project" value="InterPro"/>
</dbReference>
<dbReference type="GO" id="GO:0019843">
    <property type="term" value="F:rRNA binding"/>
    <property type="evidence" value="ECO:0007669"/>
    <property type="project" value="UniProtKB-UniRule"/>
</dbReference>
<dbReference type="GO" id="GO:0003735">
    <property type="term" value="F:structural constituent of ribosome"/>
    <property type="evidence" value="ECO:0000318"/>
    <property type="project" value="GO_Central"/>
</dbReference>
<dbReference type="GO" id="GO:0000028">
    <property type="term" value="P:ribosomal small subunit assembly"/>
    <property type="evidence" value="ECO:0000318"/>
    <property type="project" value="GO_Central"/>
</dbReference>
<dbReference type="GO" id="GO:0006412">
    <property type="term" value="P:translation"/>
    <property type="evidence" value="ECO:0007669"/>
    <property type="project" value="UniProtKB-UniRule"/>
</dbReference>
<dbReference type="FunFam" id="3.30.860.10:FF:000001">
    <property type="entry name" value="30S ribosomal protein S19"/>
    <property type="match status" value="1"/>
</dbReference>
<dbReference type="Gene3D" id="3.30.860.10">
    <property type="entry name" value="30s Ribosomal Protein S19, Chain A"/>
    <property type="match status" value="1"/>
</dbReference>
<dbReference type="HAMAP" id="MF_00531">
    <property type="entry name" value="Ribosomal_uS19"/>
    <property type="match status" value="1"/>
</dbReference>
<dbReference type="InterPro" id="IPR002222">
    <property type="entry name" value="Ribosomal_uS19"/>
</dbReference>
<dbReference type="InterPro" id="IPR005732">
    <property type="entry name" value="Ribosomal_uS19_bac-type"/>
</dbReference>
<dbReference type="InterPro" id="IPR020934">
    <property type="entry name" value="Ribosomal_uS19_CS"/>
</dbReference>
<dbReference type="InterPro" id="IPR023575">
    <property type="entry name" value="Ribosomal_uS19_SF"/>
</dbReference>
<dbReference type="NCBIfam" id="TIGR01050">
    <property type="entry name" value="rpsS_bact"/>
    <property type="match status" value="1"/>
</dbReference>
<dbReference type="PANTHER" id="PTHR11880">
    <property type="entry name" value="RIBOSOMAL PROTEIN S19P FAMILY MEMBER"/>
    <property type="match status" value="1"/>
</dbReference>
<dbReference type="PANTHER" id="PTHR11880:SF8">
    <property type="entry name" value="SMALL RIBOSOMAL SUBUNIT PROTEIN US19M"/>
    <property type="match status" value="1"/>
</dbReference>
<dbReference type="Pfam" id="PF00203">
    <property type="entry name" value="Ribosomal_S19"/>
    <property type="match status" value="1"/>
</dbReference>
<dbReference type="PIRSF" id="PIRSF002144">
    <property type="entry name" value="Ribosomal_S19"/>
    <property type="match status" value="1"/>
</dbReference>
<dbReference type="PRINTS" id="PR00975">
    <property type="entry name" value="RIBOSOMALS19"/>
</dbReference>
<dbReference type="SUPFAM" id="SSF54570">
    <property type="entry name" value="Ribosomal protein S19"/>
    <property type="match status" value="1"/>
</dbReference>
<dbReference type="PROSITE" id="PS00323">
    <property type="entry name" value="RIBOSOMAL_S19"/>
    <property type="match status" value="1"/>
</dbReference>
<evidence type="ECO:0000255" key="1">
    <source>
        <dbReference type="HAMAP-Rule" id="MF_00531"/>
    </source>
</evidence>
<evidence type="ECO:0000305" key="2"/>